<organism>
    <name type="scientific">Lactococcus lactis subsp. lactis (strain IL1403)</name>
    <name type="common">Streptococcus lactis</name>
    <dbReference type="NCBI Taxonomy" id="272623"/>
    <lineage>
        <taxon>Bacteria</taxon>
        <taxon>Bacillati</taxon>
        <taxon>Bacillota</taxon>
        <taxon>Bacilli</taxon>
        <taxon>Lactobacillales</taxon>
        <taxon>Streptococcaceae</taxon>
        <taxon>Lactococcus</taxon>
    </lineage>
</organism>
<gene>
    <name evidence="1" type="primary">rplX</name>
    <name type="ordered locus">LL2088</name>
    <name type="ORF">L0420</name>
</gene>
<accession>Q9CDX3</accession>
<sequence>MFVKTGDTVKVIAGKDRGTTGKVIKALPKVNKVVVEGVAIMKKHQKPNSENPSGAILEIEAPIHVSNVQVLDKNGVAGRVGYKVVDDKKVRFNKKSGEILD</sequence>
<evidence type="ECO:0000255" key="1">
    <source>
        <dbReference type="HAMAP-Rule" id="MF_01326"/>
    </source>
</evidence>
<evidence type="ECO:0000305" key="2"/>
<proteinExistence type="inferred from homology"/>
<reference key="1">
    <citation type="journal article" date="2001" name="Genome Res.">
        <title>The complete genome sequence of the lactic acid bacterium Lactococcus lactis ssp. lactis IL1403.</title>
        <authorList>
            <person name="Bolotin A."/>
            <person name="Wincker P."/>
            <person name="Mauger S."/>
            <person name="Jaillon O."/>
            <person name="Malarme K."/>
            <person name="Weissenbach J."/>
            <person name="Ehrlich S.D."/>
            <person name="Sorokin A."/>
        </authorList>
    </citation>
    <scope>NUCLEOTIDE SEQUENCE [LARGE SCALE GENOMIC DNA]</scope>
    <source>
        <strain>IL1403</strain>
    </source>
</reference>
<protein>
    <recommendedName>
        <fullName evidence="1">Large ribosomal subunit protein uL24</fullName>
    </recommendedName>
    <alternativeName>
        <fullName evidence="2">50S ribosomal protein L24</fullName>
    </alternativeName>
</protein>
<keyword id="KW-1185">Reference proteome</keyword>
<keyword id="KW-0687">Ribonucleoprotein</keyword>
<keyword id="KW-0689">Ribosomal protein</keyword>
<keyword id="KW-0694">RNA-binding</keyword>
<keyword id="KW-0699">rRNA-binding</keyword>
<feature type="chain" id="PRO_0000130667" description="Large ribosomal subunit protein uL24">
    <location>
        <begin position="1"/>
        <end position="101"/>
    </location>
</feature>
<name>RL24_LACLA</name>
<comment type="function">
    <text evidence="1">One of two assembly initiator proteins, it binds directly to the 5'-end of the 23S rRNA, where it nucleates assembly of the 50S subunit.</text>
</comment>
<comment type="function">
    <text evidence="1">One of the proteins that surrounds the polypeptide exit tunnel on the outside of the subunit.</text>
</comment>
<comment type="subunit">
    <text evidence="1">Part of the 50S ribosomal subunit.</text>
</comment>
<comment type="similarity">
    <text evidence="1">Belongs to the universal ribosomal protein uL24 family.</text>
</comment>
<dbReference type="EMBL" id="AE005176">
    <property type="protein sequence ID" value="AAK06186.1"/>
    <property type="molecule type" value="Genomic_DNA"/>
</dbReference>
<dbReference type="PIR" id="H86885">
    <property type="entry name" value="H86885"/>
</dbReference>
<dbReference type="RefSeq" id="NP_268245.1">
    <property type="nucleotide sequence ID" value="NC_002662.1"/>
</dbReference>
<dbReference type="RefSeq" id="WP_003129951.1">
    <property type="nucleotide sequence ID" value="NC_002662.1"/>
</dbReference>
<dbReference type="SMR" id="Q9CDX3"/>
<dbReference type="PaxDb" id="272623-L0420"/>
<dbReference type="EnsemblBacteria" id="AAK06186">
    <property type="protein sequence ID" value="AAK06186"/>
    <property type="gene ID" value="L0420"/>
</dbReference>
<dbReference type="GeneID" id="89634435"/>
<dbReference type="KEGG" id="lla:L0420"/>
<dbReference type="PATRIC" id="fig|272623.7.peg.2247"/>
<dbReference type="eggNOG" id="COG0198">
    <property type="taxonomic scope" value="Bacteria"/>
</dbReference>
<dbReference type="HOGENOM" id="CLU_093315_2_0_9"/>
<dbReference type="OrthoDB" id="9807419at2"/>
<dbReference type="Proteomes" id="UP000002196">
    <property type="component" value="Chromosome"/>
</dbReference>
<dbReference type="GO" id="GO:1990904">
    <property type="term" value="C:ribonucleoprotein complex"/>
    <property type="evidence" value="ECO:0007669"/>
    <property type="project" value="UniProtKB-KW"/>
</dbReference>
<dbReference type="GO" id="GO:0005840">
    <property type="term" value="C:ribosome"/>
    <property type="evidence" value="ECO:0007669"/>
    <property type="project" value="UniProtKB-KW"/>
</dbReference>
<dbReference type="GO" id="GO:0019843">
    <property type="term" value="F:rRNA binding"/>
    <property type="evidence" value="ECO:0007669"/>
    <property type="project" value="UniProtKB-UniRule"/>
</dbReference>
<dbReference type="GO" id="GO:0003735">
    <property type="term" value="F:structural constituent of ribosome"/>
    <property type="evidence" value="ECO:0007669"/>
    <property type="project" value="InterPro"/>
</dbReference>
<dbReference type="GO" id="GO:0006412">
    <property type="term" value="P:translation"/>
    <property type="evidence" value="ECO:0007669"/>
    <property type="project" value="UniProtKB-UniRule"/>
</dbReference>
<dbReference type="CDD" id="cd06089">
    <property type="entry name" value="KOW_RPL26"/>
    <property type="match status" value="1"/>
</dbReference>
<dbReference type="FunFam" id="2.30.30.30:FF:000004">
    <property type="entry name" value="50S ribosomal protein L24"/>
    <property type="match status" value="1"/>
</dbReference>
<dbReference type="Gene3D" id="2.30.30.30">
    <property type="match status" value="1"/>
</dbReference>
<dbReference type="HAMAP" id="MF_01326_B">
    <property type="entry name" value="Ribosomal_uL24_B"/>
    <property type="match status" value="1"/>
</dbReference>
<dbReference type="InterPro" id="IPR005824">
    <property type="entry name" value="KOW"/>
</dbReference>
<dbReference type="InterPro" id="IPR014722">
    <property type="entry name" value="Rib_uL2_dom2"/>
</dbReference>
<dbReference type="InterPro" id="IPR003256">
    <property type="entry name" value="Ribosomal_uL24"/>
</dbReference>
<dbReference type="InterPro" id="IPR005825">
    <property type="entry name" value="Ribosomal_uL24_CS"/>
</dbReference>
<dbReference type="InterPro" id="IPR041988">
    <property type="entry name" value="Ribosomal_uL24_KOW"/>
</dbReference>
<dbReference type="InterPro" id="IPR008991">
    <property type="entry name" value="Translation_prot_SH3-like_sf"/>
</dbReference>
<dbReference type="NCBIfam" id="TIGR01079">
    <property type="entry name" value="rplX_bact"/>
    <property type="match status" value="1"/>
</dbReference>
<dbReference type="PANTHER" id="PTHR12903">
    <property type="entry name" value="MITOCHONDRIAL RIBOSOMAL PROTEIN L24"/>
    <property type="match status" value="1"/>
</dbReference>
<dbReference type="Pfam" id="PF00467">
    <property type="entry name" value="KOW"/>
    <property type="match status" value="1"/>
</dbReference>
<dbReference type="Pfam" id="PF17136">
    <property type="entry name" value="ribosomal_L24"/>
    <property type="match status" value="1"/>
</dbReference>
<dbReference type="SMART" id="SM00739">
    <property type="entry name" value="KOW"/>
    <property type="match status" value="1"/>
</dbReference>
<dbReference type="SUPFAM" id="SSF50104">
    <property type="entry name" value="Translation proteins SH3-like domain"/>
    <property type="match status" value="1"/>
</dbReference>
<dbReference type="PROSITE" id="PS01108">
    <property type="entry name" value="RIBOSOMAL_L24"/>
    <property type="match status" value="1"/>
</dbReference>